<name>NUOD_PARXL</name>
<comment type="function">
    <text evidence="1">NDH-1 shuttles electrons from NADH, via FMN and iron-sulfur (Fe-S) centers, to quinones in the respiratory chain. The immediate electron acceptor for the enzyme in this species is believed to be ubiquinone. Couples the redox reaction to proton translocation (for every two electrons transferred, four hydrogen ions are translocated across the cytoplasmic membrane), and thus conserves the redox energy in a proton gradient.</text>
</comment>
<comment type="catalytic activity">
    <reaction evidence="1">
        <text>a quinone + NADH + 5 H(+)(in) = a quinol + NAD(+) + 4 H(+)(out)</text>
        <dbReference type="Rhea" id="RHEA:57888"/>
        <dbReference type="ChEBI" id="CHEBI:15378"/>
        <dbReference type="ChEBI" id="CHEBI:24646"/>
        <dbReference type="ChEBI" id="CHEBI:57540"/>
        <dbReference type="ChEBI" id="CHEBI:57945"/>
        <dbReference type="ChEBI" id="CHEBI:132124"/>
    </reaction>
</comment>
<comment type="subunit">
    <text evidence="1">NDH-1 is composed of 14 different subunits. Subunits NuoB, C, D, E, F, and G constitute the peripheral sector of the complex.</text>
</comment>
<comment type="subcellular location">
    <subcellularLocation>
        <location evidence="1">Cell inner membrane</location>
        <topology evidence="1">Peripheral membrane protein</topology>
        <orientation evidence="1">Cytoplasmic side</orientation>
    </subcellularLocation>
</comment>
<comment type="similarity">
    <text evidence="1">Belongs to the complex I 49 kDa subunit family.</text>
</comment>
<gene>
    <name evidence="1" type="primary">nuoD</name>
    <name type="ordered locus">Bxeno_A1231</name>
    <name type="ORF">Bxe_A3211</name>
</gene>
<accession>Q142H0</accession>
<reference key="1">
    <citation type="journal article" date="2006" name="Proc. Natl. Acad. Sci. U.S.A.">
        <title>Burkholderia xenovorans LB400 harbors a multi-replicon, 9.73-Mbp genome shaped for versatility.</title>
        <authorList>
            <person name="Chain P.S.G."/>
            <person name="Denef V.J."/>
            <person name="Konstantinidis K.T."/>
            <person name="Vergez L.M."/>
            <person name="Agullo L."/>
            <person name="Reyes V.L."/>
            <person name="Hauser L."/>
            <person name="Cordova M."/>
            <person name="Gomez L."/>
            <person name="Gonzalez M."/>
            <person name="Land M."/>
            <person name="Lao V."/>
            <person name="Larimer F."/>
            <person name="LiPuma J.J."/>
            <person name="Mahenthiralingam E."/>
            <person name="Malfatti S.A."/>
            <person name="Marx C.J."/>
            <person name="Parnell J.J."/>
            <person name="Ramette A."/>
            <person name="Richardson P."/>
            <person name="Seeger M."/>
            <person name="Smith D."/>
            <person name="Spilker T."/>
            <person name="Sul W.J."/>
            <person name="Tsoi T.V."/>
            <person name="Ulrich L.E."/>
            <person name="Zhulin I.B."/>
            <person name="Tiedje J.M."/>
        </authorList>
    </citation>
    <scope>NUCLEOTIDE SEQUENCE [LARGE SCALE GENOMIC DNA]</scope>
    <source>
        <strain>LB400</strain>
    </source>
</reference>
<organism>
    <name type="scientific">Paraburkholderia xenovorans (strain LB400)</name>
    <dbReference type="NCBI Taxonomy" id="266265"/>
    <lineage>
        <taxon>Bacteria</taxon>
        <taxon>Pseudomonadati</taxon>
        <taxon>Pseudomonadota</taxon>
        <taxon>Betaproteobacteria</taxon>
        <taxon>Burkholderiales</taxon>
        <taxon>Burkholderiaceae</taxon>
        <taxon>Paraburkholderia</taxon>
    </lineage>
</organism>
<protein>
    <recommendedName>
        <fullName evidence="1">NADH-quinone oxidoreductase subunit D</fullName>
        <ecNumber evidence="1">7.1.1.-</ecNumber>
    </recommendedName>
    <alternativeName>
        <fullName evidence="1">NADH dehydrogenase I subunit D</fullName>
    </alternativeName>
    <alternativeName>
        <fullName evidence="1">NDH-1 subunit D</fullName>
    </alternativeName>
</protein>
<evidence type="ECO:0000255" key="1">
    <source>
        <dbReference type="HAMAP-Rule" id="MF_01358"/>
    </source>
</evidence>
<feature type="chain" id="PRO_0000371842" description="NADH-quinone oxidoreductase subunit D">
    <location>
        <begin position="1"/>
        <end position="417"/>
    </location>
</feature>
<proteinExistence type="inferred from homology"/>
<dbReference type="EC" id="7.1.1.-" evidence="1"/>
<dbReference type="EMBL" id="CP000270">
    <property type="protein sequence ID" value="ABE29769.1"/>
    <property type="molecule type" value="Genomic_DNA"/>
</dbReference>
<dbReference type="RefSeq" id="WP_011487495.1">
    <property type="nucleotide sequence ID" value="NZ_CP008760.1"/>
</dbReference>
<dbReference type="SMR" id="Q142H0"/>
<dbReference type="STRING" id="266265.Bxe_A3211"/>
<dbReference type="KEGG" id="bxb:DR64_913"/>
<dbReference type="KEGG" id="bxe:Bxe_A3211"/>
<dbReference type="PATRIC" id="fig|266265.5.peg.1267"/>
<dbReference type="eggNOG" id="COG0649">
    <property type="taxonomic scope" value="Bacteria"/>
</dbReference>
<dbReference type="OrthoDB" id="9801496at2"/>
<dbReference type="Proteomes" id="UP000001817">
    <property type="component" value="Chromosome 1"/>
</dbReference>
<dbReference type="GO" id="GO:0005886">
    <property type="term" value="C:plasma membrane"/>
    <property type="evidence" value="ECO:0007669"/>
    <property type="project" value="UniProtKB-SubCell"/>
</dbReference>
<dbReference type="GO" id="GO:0051287">
    <property type="term" value="F:NAD binding"/>
    <property type="evidence" value="ECO:0007669"/>
    <property type="project" value="InterPro"/>
</dbReference>
<dbReference type="GO" id="GO:0050136">
    <property type="term" value="F:NADH:ubiquinone reductase (non-electrogenic) activity"/>
    <property type="evidence" value="ECO:0007669"/>
    <property type="project" value="UniProtKB-UniRule"/>
</dbReference>
<dbReference type="GO" id="GO:0048038">
    <property type="term" value="F:quinone binding"/>
    <property type="evidence" value="ECO:0007669"/>
    <property type="project" value="UniProtKB-KW"/>
</dbReference>
<dbReference type="FunFam" id="1.10.645.10:FF:000005">
    <property type="entry name" value="NADH-quinone oxidoreductase subunit D"/>
    <property type="match status" value="1"/>
</dbReference>
<dbReference type="Gene3D" id="1.10.645.10">
    <property type="entry name" value="Cytochrome-c3 Hydrogenase, chain B"/>
    <property type="match status" value="1"/>
</dbReference>
<dbReference type="HAMAP" id="MF_01358">
    <property type="entry name" value="NDH1_NuoD"/>
    <property type="match status" value="1"/>
</dbReference>
<dbReference type="InterPro" id="IPR001135">
    <property type="entry name" value="NADH_Q_OxRdtase_suD"/>
</dbReference>
<dbReference type="InterPro" id="IPR014029">
    <property type="entry name" value="NADH_UbQ_OxRdtase_49kDa_CS"/>
</dbReference>
<dbReference type="InterPro" id="IPR022885">
    <property type="entry name" value="NDH1_su_D/H"/>
</dbReference>
<dbReference type="InterPro" id="IPR029014">
    <property type="entry name" value="NiFe-Hase_large"/>
</dbReference>
<dbReference type="NCBIfam" id="TIGR01962">
    <property type="entry name" value="NuoD"/>
    <property type="match status" value="1"/>
</dbReference>
<dbReference type="NCBIfam" id="NF004739">
    <property type="entry name" value="PRK06075.1"/>
    <property type="match status" value="1"/>
</dbReference>
<dbReference type="PANTHER" id="PTHR11993:SF10">
    <property type="entry name" value="NADH DEHYDROGENASE [UBIQUINONE] IRON-SULFUR PROTEIN 2, MITOCHONDRIAL"/>
    <property type="match status" value="1"/>
</dbReference>
<dbReference type="PANTHER" id="PTHR11993">
    <property type="entry name" value="NADH-UBIQUINONE OXIDOREDUCTASE 49 KDA SUBUNIT"/>
    <property type="match status" value="1"/>
</dbReference>
<dbReference type="Pfam" id="PF00346">
    <property type="entry name" value="Complex1_49kDa"/>
    <property type="match status" value="1"/>
</dbReference>
<dbReference type="SUPFAM" id="SSF56762">
    <property type="entry name" value="HydB/Nqo4-like"/>
    <property type="match status" value="1"/>
</dbReference>
<dbReference type="PROSITE" id="PS00535">
    <property type="entry name" value="COMPLEX1_49K"/>
    <property type="match status" value="1"/>
</dbReference>
<sequence length="417" mass="47552">MAEIKNYTLNFGPQHPAAHGVLRLVLELDGEVIQRADPHIGLLHRATEKLAETKTFIQSVPYMDRLDYVSMMVNEHGYVMAIEKLLGIDVPVRAQYIRVMFDEITRVLNHLMWIGAHALDVGAMAVFLYAFREREDLMDVYEAVSGARMHAAYYRPGGVYRDLPDAMPQYKASKIRNAKALSKMNENRQGSLLDFIDDFFTRFPKCVDEYETLLTDNRIWKQRLVGIGVVSPERALNLGMTGAMLRGSGIEWDLRKKQPYEVYDKLDFDIPVGVNGDCYDRYLVRVEEMRQSTRIVKQCVEWLRKNPGPVMIDNHKVAPPSRVGMKSNMEELIHHFKLFTEGFHVPEGEAYAAVEHPKGEFGIYLISDGANKPYRLKIRAPGYAHLSTLDEMARGHMIADAVTIIGTQDIVFGEVDR</sequence>
<keyword id="KW-0997">Cell inner membrane</keyword>
<keyword id="KW-1003">Cell membrane</keyword>
<keyword id="KW-0472">Membrane</keyword>
<keyword id="KW-0520">NAD</keyword>
<keyword id="KW-0874">Quinone</keyword>
<keyword id="KW-1185">Reference proteome</keyword>
<keyword id="KW-1278">Translocase</keyword>
<keyword id="KW-0813">Transport</keyword>
<keyword id="KW-0830">Ubiquinone</keyword>